<comment type="function">
    <text evidence="2">Forms part of a macromolecular complex that catalyzes the attachment of specific amino acids to cognate tRNAs during protein synthesis.</text>
</comment>
<comment type="catalytic activity">
    <reaction evidence="2">
        <text>tRNA(Arg) + L-arginine + ATP = L-arginyl-tRNA(Arg) + AMP + diphosphate</text>
        <dbReference type="Rhea" id="RHEA:20301"/>
        <dbReference type="Rhea" id="RHEA-COMP:9658"/>
        <dbReference type="Rhea" id="RHEA-COMP:9673"/>
        <dbReference type="ChEBI" id="CHEBI:30616"/>
        <dbReference type="ChEBI" id="CHEBI:32682"/>
        <dbReference type="ChEBI" id="CHEBI:33019"/>
        <dbReference type="ChEBI" id="CHEBI:78442"/>
        <dbReference type="ChEBI" id="CHEBI:78513"/>
        <dbReference type="ChEBI" id="CHEBI:456215"/>
        <dbReference type="EC" id="6.1.1.19"/>
    </reaction>
</comment>
<comment type="subunit">
    <text evidence="1">Monomer; also part of a multisubunit complex that groups tRNA ligases for Arg, Asp, Glu, Gln, Ile, Leu, Lys, Met and Pro.</text>
</comment>
<comment type="subcellular location">
    <subcellularLocation>
        <location evidence="2">Cytoplasm</location>
    </subcellularLocation>
    <subcellularLocation>
        <location evidence="2">Cytoplasm</location>
        <location evidence="2">Cytosol</location>
    </subcellularLocation>
</comment>
<comment type="domain">
    <text evidence="2">The alpha-helical N-terminus (residues 1-72) mediates interaction with AIMP1 and thereby contributes to the assembly of the multisynthetase complex.</text>
</comment>
<comment type="similarity">
    <text evidence="4">Belongs to the class-I aminoacyl-tRNA synthetase family.</text>
</comment>
<protein>
    <recommendedName>
        <fullName>Arginine--tRNA ligase, cytoplasmic</fullName>
        <ecNumber evidence="2">6.1.1.19</ecNumber>
    </recommendedName>
    <alternativeName>
        <fullName>Arginyl-tRNA synthetase</fullName>
        <shortName>ArgRS</shortName>
    </alternativeName>
</protein>
<accession>Q5ZM11</accession>
<organism>
    <name type="scientific">Gallus gallus</name>
    <name type="common">Chicken</name>
    <dbReference type="NCBI Taxonomy" id="9031"/>
    <lineage>
        <taxon>Eukaryota</taxon>
        <taxon>Metazoa</taxon>
        <taxon>Chordata</taxon>
        <taxon>Craniata</taxon>
        <taxon>Vertebrata</taxon>
        <taxon>Euteleostomi</taxon>
        <taxon>Archelosauria</taxon>
        <taxon>Archosauria</taxon>
        <taxon>Dinosauria</taxon>
        <taxon>Saurischia</taxon>
        <taxon>Theropoda</taxon>
        <taxon>Coelurosauria</taxon>
        <taxon>Aves</taxon>
        <taxon>Neognathae</taxon>
        <taxon>Galloanserae</taxon>
        <taxon>Galliformes</taxon>
        <taxon>Phasianidae</taxon>
        <taxon>Phasianinae</taxon>
        <taxon>Gallus</taxon>
    </lineage>
</organism>
<name>SYRC_CHICK</name>
<gene>
    <name type="primary">RARS1</name>
    <name type="synonym">RARS</name>
    <name type="ORF">RCJMB04_3h11</name>
</gene>
<keyword id="KW-0030">Aminoacyl-tRNA synthetase</keyword>
<keyword id="KW-0067">ATP-binding</keyword>
<keyword id="KW-0963">Cytoplasm</keyword>
<keyword id="KW-0436">Ligase</keyword>
<keyword id="KW-0547">Nucleotide-binding</keyword>
<keyword id="KW-0648">Protein biosynthesis</keyword>
<keyword id="KW-1185">Reference proteome</keyword>
<reference key="1">
    <citation type="journal article" date="2005" name="Genome Biol.">
        <title>Full-length cDNAs from chicken bursal lymphocytes to facilitate gene function analysis.</title>
        <authorList>
            <person name="Caldwell R.B."/>
            <person name="Kierzek A.M."/>
            <person name="Arakawa H."/>
            <person name="Bezzubov Y."/>
            <person name="Zaim J."/>
            <person name="Fiedler P."/>
            <person name="Kutter S."/>
            <person name="Blagodatski A."/>
            <person name="Kostovska D."/>
            <person name="Koter M."/>
            <person name="Plachy J."/>
            <person name="Carninci P."/>
            <person name="Hayashizaki Y."/>
            <person name="Buerstedde J.-M."/>
        </authorList>
    </citation>
    <scope>NUCLEOTIDE SEQUENCE [LARGE SCALE MRNA]</scope>
    <source>
        <strain>CB</strain>
        <tissue>Bursa of Fabricius</tissue>
    </source>
</reference>
<sequence>MEARVAEAAARLARQENEIKSLTAEIEHLKNFGCLGISPSLEGLRDENAKLKYRLNFLQKSLQEEQSKTVKSMININSRLQEIFGAAIQAAYPELENPPLVVTPSQQPKFGDYQCNSAMGITQILLKTKEQKVSPREIAEKITKHIPANECIEKVEIAGPGFINVHLRKDFVSKQLSSLLVNGVQPPAIGKRKKVILDFSSPNIAKEMHVGHLRSTIIGESMCRLFEFAGYDVLRLNHLGDWGTQFGMLIAHLQDRFPDYLTVSPPIGDLQAFYKESKRRFDTEEEFKKRAYQCVVLLQSKDPDFIKAWELICDVSRKEFQKIYNCLDVTLTERGESFYQDMMKDIVKEFEDKGFVQVDDGRKIVFVPGFSVPLTIMKSDGGYTYDTSDLAALRHRLLEEKGDILIYVVDSGQSVHLQTVFAAGQMIGWYDPKVTRITHAAFGVVLGEDKKKFKTRSGDTVRLMDLLEEGLKRAMDKLKDKERDKVLTPEELKAAQMSVAFGCIKYADLSHNRLNDYVFSFDKMLDDRGNTAAYLLYAFTRIRAIARLANIDEGMLRKAAREEVIVLDHEKEWKLGKCILRFPEILQKILDDLLLHTLCDYLYELATTFTEFYDNCYCVEKDRQSGQIMKVNTWRLLLCEATATIMAKGFDILGIKPVERM</sequence>
<proteinExistence type="evidence at transcript level"/>
<dbReference type="EC" id="6.1.1.19" evidence="2"/>
<dbReference type="EMBL" id="AJ719573">
    <property type="protein sequence ID" value="CAG31232.1"/>
    <property type="molecule type" value="mRNA"/>
</dbReference>
<dbReference type="RefSeq" id="NP_001025778.1">
    <property type="nucleotide sequence ID" value="NM_001030607.1"/>
</dbReference>
<dbReference type="SMR" id="Q5ZM11"/>
<dbReference type="FunCoup" id="Q5ZM11">
    <property type="interactions" value="2144"/>
</dbReference>
<dbReference type="STRING" id="9031.ENSGALP00000053061"/>
<dbReference type="PaxDb" id="9031-ENSGALP00000002862"/>
<dbReference type="GeneID" id="416168"/>
<dbReference type="KEGG" id="gga:416168"/>
<dbReference type="CTD" id="416168"/>
<dbReference type="VEuPathDB" id="HostDB:geneid_416168"/>
<dbReference type="eggNOG" id="KOG4426">
    <property type="taxonomic scope" value="Eukaryota"/>
</dbReference>
<dbReference type="InParanoid" id="Q5ZM11"/>
<dbReference type="OrthoDB" id="68056at2759"/>
<dbReference type="PhylomeDB" id="Q5ZM11"/>
<dbReference type="PRO" id="PR:Q5ZM11"/>
<dbReference type="Proteomes" id="UP000000539">
    <property type="component" value="Unassembled WGS sequence"/>
</dbReference>
<dbReference type="GO" id="GO:0017101">
    <property type="term" value="C:aminoacyl-tRNA synthetase multienzyme complex"/>
    <property type="evidence" value="ECO:0000250"/>
    <property type="project" value="UniProtKB"/>
</dbReference>
<dbReference type="GO" id="GO:0005829">
    <property type="term" value="C:cytosol"/>
    <property type="evidence" value="ECO:0000250"/>
    <property type="project" value="UniProtKB"/>
</dbReference>
<dbReference type="GO" id="GO:0004814">
    <property type="term" value="F:arginine-tRNA ligase activity"/>
    <property type="evidence" value="ECO:0000250"/>
    <property type="project" value="UniProtKB"/>
</dbReference>
<dbReference type="GO" id="GO:0005524">
    <property type="term" value="F:ATP binding"/>
    <property type="evidence" value="ECO:0007669"/>
    <property type="project" value="UniProtKB-KW"/>
</dbReference>
<dbReference type="GO" id="GO:0006420">
    <property type="term" value="P:arginyl-tRNA aminoacylation"/>
    <property type="evidence" value="ECO:0000250"/>
    <property type="project" value="UniProtKB"/>
</dbReference>
<dbReference type="CDD" id="cd00671">
    <property type="entry name" value="ArgRS_core"/>
    <property type="match status" value="1"/>
</dbReference>
<dbReference type="FunFam" id="1.10.730.10:FF:000016">
    <property type="entry name" value="Arginine--tRNA ligase, cytoplasmic"/>
    <property type="match status" value="1"/>
</dbReference>
<dbReference type="FunFam" id="3.30.1360.70:FF:000002">
    <property type="entry name" value="arginine--tRNA ligase, cytoplasmic"/>
    <property type="match status" value="1"/>
</dbReference>
<dbReference type="FunFam" id="3.40.50.620:FF:000084">
    <property type="entry name" value="arginine--tRNA ligase, cytoplasmic"/>
    <property type="match status" value="1"/>
</dbReference>
<dbReference type="Gene3D" id="3.30.1360.70">
    <property type="entry name" value="Arginyl tRNA synthetase N-terminal domain"/>
    <property type="match status" value="1"/>
</dbReference>
<dbReference type="Gene3D" id="3.40.50.620">
    <property type="entry name" value="HUPs"/>
    <property type="match status" value="1"/>
</dbReference>
<dbReference type="Gene3D" id="1.10.730.10">
    <property type="entry name" value="Isoleucyl-tRNA Synthetase, Domain 1"/>
    <property type="match status" value="1"/>
</dbReference>
<dbReference type="HAMAP" id="MF_00123">
    <property type="entry name" value="Arg_tRNA_synth"/>
    <property type="match status" value="1"/>
</dbReference>
<dbReference type="InterPro" id="IPR001412">
    <property type="entry name" value="aa-tRNA-synth_I_CS"/>
</dbReference>
<dbReference type="InterPro" id="IPR001278">
    <property type="entry name" value="Arg-tRNA-ligase"/>
</dbReference>
<dbReference type="InterPro" id="IPR005148">
    <property type="entry name" value="Arg-tRNA-synth_N"/>
</dbReference>
<dbReference type="InterPro" id="IPR036695">
    <property type="entry name" value="Arg-tRNA-synth_N_sf"/>
</dbReference>
<dbReference type="InterPro" id="IPR035684">
    <property type="entry name" value="ArgRS_core"/>
</dbReference>
<dbReference type="InterPro" id="IPR008909">
    <property type="entry name" value="DALR_anticod-bd"/>
</dbReference>
<dbReference type="InterPro" id="IPR014729">
    <property type="entry name" value="Rossmann-like_a/b/a_fold"/>
</dbReference>
<dbReference type="InterPro" id="IPR009080">
    <property type="entry name" value="tRNAsynth_Ia_anticodon-bd"/>
</dbReference>
<dbReference type="NCBIfam" id="TIGR00456">
    <property type="entry name" value="argS"/>
    <property type="match status" value="1"/>
</dbReference>
<dbReference type="PANTHER" id="PTHR11956:SF5">
    <property type="entry name" value="ARGININE--TRNA LIGASE, CYTOPLASMIC"/>
    <property type="match status" value="1"/>
</dbReference>
<dbReference type="PANTHER" id="PTHR11956">
    <property type="entry name" value="ARGINYL-TRNA SYNTHETASE"/>
    <property type="match status" value="1"/>
</dbReference>
<dbReference type="Pfam" id="PF03485">
    <property type="entry name" value="Arg_tRNA_synt_N"/>
    <property type="match status" value="1"/>
</dbReference>
<dbReference type="Pfam" id="PF05746">
    <property type="entry name" value="DALR_1"/>
    <property type="match status" value="1"/>
</dbReference>
<dbReference type="Pfam" id="PF00750">
    <property type="entry name" value="tRNA-synt_1d"/>
    <property type="match status" value="1"/>
</dbReference>
<dbReference type="PRINTS" id="PR01038">
    <property type="entry name" value="TRNASYNTHARG"/>
</dbReference>
<dbReference type="SMART" id="SM01016">
    <property type="entry name" value="Arg_tRNA_synt_N"/>
    <property type="match status" value="1"/>
</dbReference>
<dbReference type="SMART" id="SM00836">
    <property type="entry name" value="DALR_1"/>
    <property type="match status" value="1"/>
</dbReference>
<dbReference type="SUPFAM" id="SSF47323">
    <property type="entry name" value="Anticodon-binding domain of a subclass of class I aminoacyl-tRNA synthetases"/>
    <property type="match status" value="1"/>
</dbReference>
<dbReference type="SUPFAM" id="SSF55190">
    <property type="entry name" value="Arginyl-tRNA synthetase (ArgRS), N-terminal 'additional' domain"/>
    <property type="match status" value="1"/>
</dbReference>
<dbReference type="SUPFAM" id="SSF52374">
    <property type="entry name" value="Nucleotidylyl transferase"/>
    <property type="match status" value="1"/>
</dbReference>
<dbReference type="PROSITE" id="PS00178">
    <property type="entry name" value="AA_TRNA_LIGASE_I"/>
    <property type="match status" value="1"/>
</dbReference>
<evidence type="ECO:0000250" key="1"/>
<evidence type="ECO:0000250" key="2">
    <source>
        <dbReference type="UniProtKB" id="P54136"/>
    </source>
</evidence>
<evidence type="ECO:0000250" key="3">
    <source>
        <dbReference type="UniProtKB" id="Q05506"/>
    </source>
</evidence>
<evidence type="ECO:0000305" key="4"/>
<feature type="chain" id="PRO_0000250729" description="Arginine--tRNA ligase, cytoplasmic">
    <location>
        <begin position="1"/>
        <end position="661"/>
    </location>
</feature>
<feature type="region of interest" description="Could be involved in the assembly of the multisynthetase complex" evidence="1">
    <location>
        <begin position="1"/>
        <end position="72"/>
    </location>
</feature>
<feature type="region of interest" description="Interaction with tRNA" evidence="3">
    <location>
        <begin position="530"/>
        <end position="544"/>
    </location>
</feature>
<feature type="short sequence motif" description="'HIGH' region">
    <location>
        <begin position="202"/>
        <end position="213"/>
    </location>
</feature>
<feature type="binding site" evidence="2">
    <location>
        <begin position="201"/>
        <end position="203"/>
    </location>
    <ligand>
        <name>L-arginine</name>
        <dbReference type="ChEBI" id="CHEBI:32682"/>
    </ligand>
</feature>
<feature type="binding site" evidence="2">
    <location>
        <position position="212"/>
    </location>
    <ligand>
        <name>L-arginine</name>
        <dbReference type="ChEBI" id="CHEBI:32682"/>
    </ligand>
</feature>
<feature type="binding site" evidence="2">
    <location>
        <position position="385"/>
    </location>
    <ligand>
        <name>L-arginine</name>
        <dbReference type="ChEBI" id="CHEBI:32682"/>
    </ligand>
</feature>
<feature type="binding site" evidence="2">
    <location>
        <position position="389"/>
    </location>
    <ligand>
        <name>L-arginine</name>
        <dbReference type="ChEBI" id="CHEBI:32682"/>
    </ligand>
</feature>
<feature type="binding site" evidence="2">
    <location>
        <position position="413"/>
    </location>
    <ligand>
        <name>L-arginine</name>
        <dbReference type="ChEBI" id="CHEBI:32682"/>
    </ligand>
</feature>